<dbReference type="EC" id="6.3.1.2" evidence="2"/>
<dbReference type="EMBL" id="AL513382">
    <property type="protein sequence ID" value="CAD03093.1"/>
    <property type="molecule type" value="Genomic_DNA"/>
</dbReference>
<dbReference type="EMBL" id="AE014613">
    <property type="protein sequence ID" value="AAO71115.1"/>
    <property type="molecule type" value="Genomic_DNA"/>
</dbReference>
<dbReference type="RefSeq" id="NP_458042.1">
    <property type="nucleotide sequence ID" value="NC_003198.1"/>
</dbReference>
<dbReference type="RefSeq" id="WP_001271699.1">
    <property type="nucleotide sequence ID" value="NZ_WSUR01000010.1"/>
</dbReference>
<dbReference type="PDB" id="5LDF">
    <property type="method" value="EM"/>
    <property type="resolution" value="6.20 A"/>
    <property type="chains" value="A/B/C/D/E/F/G/H/I/J/K/L=4-469"/>
</dbReference>
<dbReference type="PDBsum" id="5LDF"/>
<dbReference type="EMDB" id="EMD-4039"/>
<dbReference type="SMR" id="P0A1P7"/>
<dbReference type="STRING" id="220341.gene:17587730"/>
<dbReference type="KEGG" id="stt:t3614"/>
<dbReference type="KEGG" id="sty:STY3874"/>
<dbReference type="PATRIC" id="fig|220341.7.peg.3952"/>
<dbReference type="eggNOG" id="COG0174">
    <property type="taxonomic scope" value="Bacteria"/>
</dbReference>
<dbReference type="HOGENOM" id="CLU_017290_1_2_6"/>
<dbReference type="OMA" id="PHPHEFE"/>
<dbReference type="OrthoDB" id="9807095at2"/>
<dbReference type="Proteomes" id="UP000000541">
    <property type="component" value="Chromosome"/>
</dbReference>
<dbReference type="Proteomes" id="UP000002670">
    <property type="component" value="Chromosome"/>
</dbReference>
<dbReference type="GO" id="GO:0005737">
    <property type="term" value="C:cytoplasm"/>
    <property type="evidence" value="ECO:0007669"/>
    <property type="project" value="UniProtKB-SubCell"/>
</dbReference>
<dbReference type="GO" id="GO:0016020">
    <property type="term" value="C:membrane"/>
    <property type="evidence" value="ECO:0007669"/>
    <property type="project" value="TreeGrafter"/>
</dbReference>
<dbReference type="GO" id="GO:0005524">
    <property type="term" value="F:ATP binding"/>
    <property type="evidence" value="ECO:0007669"/>
    <property type="project" value="UniProtKB-KW"/>
</dbReference>
<dbReference type="GO" id="GO:0004356">
    <property type="term" value="F:glutamine synthetase activity"/>
    <property type="evidence" value="ECO:0007669"/>
    <property type="project" value="UniProtKB-EC"/>
</dbReference>
<dbReference type="GO" id="GO:0046872">
    <property type="term" value="F:metal ion binding"/>
    <property type="evidence" value="ECO:0007669"/>
    <property type="project" value="UniProtKB-KW"/>
</dbReference>
<dbReference type="GO" id="GO:0006542">
    <property type="term" value="P:glutamine biosynthetic process"/>
    <property type="evidence" value="ECO:0007669"/>
    <property type="project" value="InterPro"/>
</dbReference>
<dbReference type="GO" id="GO:0019740">
    <property type="term" value="P:nitrogen utilization"/>
    <property type="evidence" value="ECO:0007669"/>
    <property type="project" value="TreeGrafter"/>
</dbReference>
<dbReference type="FunFam" id="3.10.20.70:FF:000001">
    <property type="entry name" value="Glutamine synthetase"/>
    <property type="match status" value="1"/>
</dbReference>
<dbReference type="FunFam" id="3.30.590.10:FF:000001">
    <property type="entry name" value="Glutamine synthetase"/>
    <property type="match status" value="1"/>
</dbReference>
<dbReference type="Gene3D" id="3.10.20.70">
    <property type="entry name" value="Glutamine synthetase, N-terminal domain"/>
    <property type="match status" value="1"/>
</dbReference>
<dbReference type="Gene3D" id="3.30.590.10">
    <property type="entry name" value="Glutamine synthetase/guanido kinase, catalytic domain"/>
    <property type="match status" value="1"/>
</dbReference>
<dbReference type="InterPro" id="IPR008147">
    <property type="entry name" value="Gln_synt_N"/>
</dbReference>
<dbReference type="InterPro" id="IPR036651">
    <property type="entry name" value="Gln_synt_N_sf"/>
</dbReference>
<dbReference type="InterPro" id="IPR014746">
    <property type="entry name" value="Gln_synth/guanido_kin_cat_dom"/>
</dbReference>
<dbReference type="InterPro" id="IPR008146">
    <property type="entry name" value="Gln_synth_cat_dom"/>
</dbReference>
<dbReference type="InterPro" id="IPR027303">
    <property type="entry name" value="Gln_synth_gly_rich_site"/>
</dbReference>
<dbReference type="InterPro" id="IPR004809">
    <property type="entry name" value="Gln_synth_I"/>
</dbReference>
<dbReference type="InterPro" id="IPR001637">
    <property type="entry name" value="Gln_synth_I_adenylation_site"/>
</dbReference>
<dbReference type="InterPro" id="IPR027302">
    <property type="entry name" value="Gln_synth_N_conserv_site"/>
</dbReference>
<dbReference type="NCBIfam" id="TIGR00653">
    <property type="entry name" value="GlnA"/>
    <property type="match status" value="1"/>
</dbReference>
<dbReference type="NCBIfam" id="NF007006">
    <property type="entry name" value="PRK09469.1"/>
    <property type="match status" value="1"/>
</dbReference>
<dbReference type="PANTHER" id="PTHR43407">
    <property type="entry name" value="GLUTAMINE SYNTHETASE"/>
    <property type="match status" value="1"/>
</dbReference>
<dbReference type="PANTHER" id="PTHR43407:SF2">
    <property type="entry name" value="GLUTAMINE SYNTHETASE"/>
    <property type="match status" value="1"/>
</dbReference>
<dbReference type="Pfam" id="PF00120">
    <property type="entry name" value="Gln-synt_C"/>
    <property type="match status" value="1"/>
</dbReference>
<dbReference type="Pfam" id="PF03951">
    <property type="entry name" value="Gln-synt_N"/>
    <property type="match status" value="1"/>
</dbReference>
<dbReference type="SMART" id="SM01230">
    <property type="entry name" value="Gln-synt_C"/>
    <property type="match status" value="1"/>
</dbReference>
<dbReference type="SUPFAM" id="SSF54368">
    <property type="entry name" value="Glutamine synthetase, N-terminal domain"/>
    <property type="match status" value="1"/>
</dbReference>
<dbReference type="SUPFAM" id="SSF55931">
    <property type="entry name" value="Glutamine synthetase/guanido kinase"/>
    <property type="match status" value="1"/>
</dbReference>
<dbReference type="PROSITE" id="PS00180">
    <property type="entry name" value="GLNA_1"/>
    <property type="match status" value="1"/>
</dbReference>
<dbReference type="PROSITE" id="PS00182">
    <property type="entry name" value="GLNA_ADENYLATION"/>
    <property type="match status" value="1"/>
</dbReference>
<dbReference type="PROSITE" id="PS00181">
    <property type="entry name" value="GLNA_ATP"/>
    <property type="match status" value="1"/>
</dbReference>
<dbReference type="PROSITE" id="PS51986">
    <property type="entry name" value="GS_BETA_GRASP"/>
    <property type="match status" value="1"/>
</dbReference>
<dbReference type="PROSITE" id="PS51987">
    <property type="entry name" value="GS_CATALYTIC"/>
    <property type="match status" value="1"/>
</dbReference>
<reference key="1">
    <citation type="journal article" date="2001" name="Nature">
        <title>Complete genome sequence of a multiple drug resistant Salmonella enterica serovar Typhi CT18.</title>
        <authorList>
            <person name="Parkhill J."/>
            <person name="Dougan G."/>
            <person name="James K.D."/>
            <person name="Thomson N.R."/>
            <person name="Pickard D."/>
            <person name="Wain J."/>
            <person name="Churcher C.M."/>
            <person name="Mungall K.L."/>
            <person name="Bentley S.D."/>
            <person name="Holden M.T.G."/>
            <person name="Sebaihia M."/>
            <person name="Baker S."/>
            <person name="Basham D."/>
            <person name="Brooks K."/>
            <person name="Chillingworth T."/>
            <person name="Connerton P."/>
            <person name="Cronin A."/>
            <person name="Davis P."/>
            <person name="Davies R.M."/>
            <person name="Dowd L."/>
            <person name="White N."/>
            <person name="Farrar J."/>
            <person name="Feltwell T."/>
            <person name="Hamlin N."/>
            <person name="Haque A."/>
            <person name="Hien T.T."/>
            <person name="Holroyd S."/>
            <person name="Jagels K."/>
            <person name="Krogh A."/>
            <person name="Larsen T.S."/>
            <person name="Leather S."/>
            <person name="Moule S."/>
            <person name="O'Gaora P."/>
            <person name="Parry C."/>
            <person name="Quail M.A."/>
            <person name="Rutherford K.M."/>
            <person name="Simmonds M."/>
            <person name="Skelton J."/>
            <person name="Stevens K."/>
            <person name="Whitehead S."/>
            <person name="Barrell B.G."/>
        </authorList>
    </citation>
    <scope>NUCLEOTIDE SEQUENCE [LARGE SCALE GENOMIC DNA]</scope>
    <source>
        <strain>CT18</strain>
    </source>
</reference>
<reference key="2">
    <citation type="journal article" date="2003" name="J. Bacteriol.">
        <title>Comparative genomics of Salmonella enterica serovar Typhi strains Ty2 and CT18.</title>
        <authorList>
            <person name="Deng W."/>
            <person name="Liou S.-R."/>
            <person name="Plunkett G. III"/>
            <person name="Mayhew G.F."/>
            <person name="Rose D.J."/>
            <person name="Burland V."/>
            <person name="Kodoyianni V."/>
            <person name="Schwartz D.C."/>
            <person name="Blattner F.R."/>
        </authorList>
    </citation>
    <scope>NUCLEOTIDE SEQUENCE [LARGE SCALE GENOMIC DNA]</scope>
    <source>
        <strain>ATCC 700931 / Ty2</strain>
    </source>
</reference>
<reference key="3">
    <citation type="journal article" date="2016" name="Sci. Rep.">
        <title>Fusion to a homo-oligomeric scaffold allows cryo-EM analysis of a small protein.</title>
        <authorList>
            <person name="Coscia F."/>
            <person name="Estrozi L.F."/>
            <person name="Hans F."/>
            <person name="Malet H."/>
            <person name="Noirclerc-Savoye M."/>
            <person name="Schoehn G."/>
            <person name="Petosa C."/>
        </authorList>
    </citation>
    <scope>STRUCTURE BY ELECTRON MICROSCOPY (6.20 ANGSTROMS) OF 4-469</scope>
</reference>
<comment type="function">
    <text evidence="2">Catalyzes the ATP-dependent biosynthesis of glutamine from glutamate and ammonia.</text>
</comment>
<comment type="catalytic activity">
    <reaction evidence="2">
        <text>L-glutamate + NH4(+) + ATP = L-glutamine + ADP + phosphate + H(+)</text>
        <dbReference type="Rhea" id="RHEA:16169"/>
        <dbReference type="ChEBI" id="CHEBI:15378"/>
        <dbReference type="ChEBI" id="CHEBI:28938"/>
        <dbReference type="ChEBI" id="CHEBI:29985"/>
        <dbReference type="ChEBI" id="CHEBI:30616"/>
        <dbReference type="ChEBI" id="CHEBI:43474"/>
        <dbReference type="ChEBI" id="CHEBI:58359"/>
        <dbReference type="ChEBI" id="CHEBI:456216"/>
        <dbReference type="EC" id="6.3.1.2"/>
    </reaction>
</comment>
<comment type="cofactor">
    <cofactor evidence="2">
        <name>Mn(2+)</name>
        <dbReference type="ChEBI" id="CHEBI:29035"/>
    </cofactor>
    <text evidence="2">Binds 2 Mn(2+) ions per subunit.</text>
</comment>
<comment type="activity regulation">
    <text evidence="6">When cellular nitrogen levels are high, the C-terminal adenylyl transferase (AT) of GlnE inhibits GlnA by covalent transfer of an adenylyl group from ATP to Tyr-398. Conversely, when nitrogen levels are low, the N-terminal adenylyl removase (AR) of GlnE activates GlnA by removing the adenylyl group by phosphorolysis. The fully adenylated enzyme complex is inactive.</text>
</comment>
<comment type="subunit">
    <text evidence="2">Oligomer of 12 subunits arranged in the form of two hexagons.</text>
</comment>
<comment type="subcellular location">
    <subcellularLocation>
        <location evidence="5">Cytoplasm</location>
    </subcellularLocation>
</comment>
<comment type="similarity">
    <text evidence="9">Belongs to the glutamine synthetase family.</text>
</comment>
<keyword id="KW-0002">3D-structure</keyword>
<keyword id="KW-0067">ATP-binding</keyword>
<keyword id="KW-0963">Cytoplasm</keyword>
<keyword id="KW-0436">Ligase</keyword>
<keyword id="KW-0460">Magnesium</keyword>
<keyword id="KW-0479">Metal-binding</keyword>
<keyword id="KW-0547">Nucleotide-binding</keyword>
<keyword id="KW-0597">Phosphoprotein</keyword>
<evidence type="ECO:0000250" key="1"/>
<evidence type="ECO:0000250" key="2">
    <source>
        <dbReference type="UniProtKB" id="P0A1P6"/>
    </source>
</evidence>
<evidence type="ECO:0000250" key="3">
    <source>
        <dbReference type="UniProtKB" id="P12425"/>
    </source>
</evidence>
<evidence type="ECO:0000250" key="4">
    <source>
        <dbReference type="UniProtKB" id="P77961"/>
    </source>
</evidence>
<evidence type="ECO:0000250" key="5">
    <source>
        <dbReference type="UniProtKB" id="P9WN39"/>
    </source>
</evidence>
<evidence type="ECO:0000250" key="6">
    <source>
        <dbReference type="UniProtKB" id="Q3V5W6"/>
    </source>
</evidence>
<evidence type="ECO:0000255" key="7">
    <source>
        <dbReference type="PROSITE-ProRule" id="PRU01330"/>
    </source>
</evidence>
<evidence type="ECO:0000255" key="8">
    <source>
        <dbReference type="PROSITE-ProRule" id="PRU01331"/>
    </source>
</evidence>
<evidence type="ECO:0000305" key="9"/>
<accession>P0A1P7</accession>
<accession>P06201</accession>
<accession>Q60007</accession>
<feature type="initiator methionine" description="Removed" evidence="1">
    <location>
        <position position="1"/>
    </location>
</feature>
<feature type="chain" id="PRO_0000153252" description="Glutamine synthetase">
    <location>
        <begin position="2"/>
        <end position="469"/>
    </location>
</feature>
<feature type="domain" description="GS beta-grasp" evidence="7">
    <location>
        <begin position="13"/>
        <end position="97"/>
    </location>
</feature>
<feature type="domain" description="GS catalytic" evidence="8">
    <location>
        <begin position="105"/>
        <end position="469"/>
    </location>
</feature>
<feature type="binding site" evidence="2">
    <location>
        <position position="130"/>
    </location>
    <ligand>
        <name>Mg(2+)</name>
        <dbReference type="ChEBI" id="CHEBI:18420"/>
        <label>1</label>
    </ligand>
</feature>
<feature type="binding site" evidence="2">
    <location>
        <position position="132"/>
    </location>
    <ligand>
        <name>Mg(2+)</name>
        <dbReference type="ChEBI" id="CHEBI:18420"/>
        <label>2</label>
    </ligand>
</feature>
<feature type="binding site" evidence="2">
    <location>
        <position position="208"/>
    </location>
    <ligand>
        <name>ATP</name>
        <dbReference type="ChEBI" id="CHEBI:30616"/>
    </ligand>
</feature>
<feature type="binding site" evidence="2">
    <location>
        <position position="213"/>
    </location>
    <ligand>
        <name>Mg(2+)</name>
        <dbReference type="ChEBI" id="CHEBI:18420"/>
        <label>2</label>
    </ligand>
</feature>
<feature type="binding site" evidence="2">
    <location>
        <position position="221"/>
    </location>
    <ligand>
        <name>Mg(2+)</name>
        <dbReference type="ChEBI" id="CHEBI:18420"/>
        <label>2</label>
    </ligand>
</feature>
<feature type="binding site" evidence="2">
    <location>
        <begin position="265"/>
        <end position="266"/>
    </location>
    <ligand>
        <name>L-glutamate</name>
        <dbReference type="ChEBI" id="CHEBI:29985"/>
    </ligand>
</feature>
<feature type="binding site" evidence="3">
    <location>
        <position position="266"/>
    </location>
    <ligand>
        <name>L-glutamate</name>
        <dbReference type="ChEBI" id="CHEBI:29985"/>
    </ligand>
</feature>
<feature type="binding site" evidence="2">
    <location>
        <position position="270"/>
    </location>
    <ligand>
        <name>Mg(2+)</name>
        <dbReference type="ChEBI" id="CHEBI:18420"/>
        <label>1</label>
    </ligand>
</feature>
<feature type="binding site" evidence="2">
    <location>
        <begin position="272"/>
        <end position="274"/>
    </location>
    <ligand>
        <name>ATP</name>
        <dbReference type="ChEBI" id="CHEBI:30616"/>
    </ligand>
</feature>
<feature type="binding site" evidence="2">
    <location>
        <position position="274"/>
    </location>
    <ligand>
        <name>ATP</name>
        <dbReference type="ChEBI" id="CHEBI:30616"/>
    </ligand>
</feature>
<feature type="binding site" evidence="2">
    <location>
        <position position="322"/>
    </location>
    <ligand>
        <name>L-glutamate</name>
        <dbReference type="ChEBI" id="CHEBI:29985"/>
    </ligand>
</feature>
<feature type="binding site" evidence="2">
    <location>
        <position position="328"/>
    </location>
    <ligand>
        <name>L-glutamate</name>
        <dbReference type="ChEBI" id="CHEBI:29985"/>
    </ligand>
</feature>
<feature type="binding site" evidence="4">
    <location>
        <position position="340"/>
    </location>
    <ligand>
        <name>ATP</name>
        <dbReference type="ChEBI" id="CHEBI:30616"/>
    </ligand>
</feature>
<feature type="binding site" evidence="5">
    <location>
        <position position="340"/>
    </location>
    <ligand>
        <name>L-glutamate</name>
        <dbReference type="ChEBI" id="CHEBI:29985"/>
    </ligand>
</feature>
<feature type="binding site" evidence="5">
    <location>
        <position position="345"/>
    </location>
    <ligand>
        <name>ATP</name>
        <dbReference type="ChEBI" id="CHEBI:30616"/>
    </ligand>
</feature>
<feature type="binding site" evidence="4">
    <location>
        <position position="353"/>
    </location>
    <ligand>
        <name>ATP</name>
        <dbReference type="ChEBI" id="CHEBI:30616"/>
    </ligand>
</feature>
<feature type="binding site" evidence="2">
    <location>
        <position position="358"/>
    </location>
    <ligand>
        <name>Mg(2+)</name>
        <dbReference type="ChEBI" id="CHEBI:18420"/>
        <label>1</label>
    </ligand>
</feature>
<feature type="binding site" evidence="2">
    <location>
        <position position="360"/>
    </location>
    <ligand>
        <name>L-glutamate</name>
        <dbReference type="ChEBI" id="CHEBI:29985"/>
    </ligand>
</feature>
<feature type="modified residue" description="O-AMP-tyrosine" evidence="5">
    <location>
        <position position="398"/>
    </location>
</feature>
<protein>
    <recommendedName>
        <fullName evidence="2">Glutamine synthetase</fullName>
        <shortName evidence="2">GS</shortName>
        <ecNumber evidence="2">6.3.1.2</ecNumber>
    </recommendedName>
    <alternativeName>
        <fullName evidence="9">Glutamate--ammonia ligase</fullName>
    </alternativeName>
    <alternativeName>
        <fullName evidence="9">Glutamine synthetase I beta</fullName>
        <shortName evidence="9">GSI beta</shortName>
    </alternativeName>
</protein>
<proteinExistence type="evidence at protein level"/>
<name>GLN1B_SALTI</name>
<sequence>MSAEHVLTMLNEHEVKFVDLRFTDTKGKEQHVTIPAHQVNAEFFEEGKMFDGSSIGGWKGINESDMVLMPDASTAVIDPFFADSTLIIRCDILEPGTLQGYDRDPRSIAKRAEDYLRATGIADTVLFGPEPEFFLFDDIRFGASISGSHVAIDDIEGAWNSSTKYEGGNKGHRPGVKGGYFPVPPVDSAQDIRSEMCLVMEQMGLVVEAHHHEVATAGQNEVATRFNTMTKKADEIQIYKYVVHNVAHRFGKTATFMPKPMFGDNGSGMHCHMSLAKNGTNLFSGDKYAGLSEQALYYIGGVIKHAKAINALANPTTNSYKRLVPGYEAPVMLAYSARNRSASIRIPVVASPKARRIEVRFPDPAANPYLCFAALLMAGLDGIKNKIHPGEAMDKNLYDLPPEEAKEIPQVAGSLEEALNALDLDREFLKAGGVFTDEAIDAYIALRREEDDRVRMTPHPVEFELYYSV</sequence>
<gene>
    <name evidence="2" type="primary">glnA</name>
    <name type="ordered locus">STY3874</name>
    <name type="ordered locus">t3614</name>
</gene>
<organism>
    <name type="scientific">Salmonella typhi</name>
    <dbReference type="NCBI Taxonomy" id="90370"/>
    <lineage>
        <taxon>Bacteria</taxon>
        <taxon>Pseudomonadati</taxon>
        <taxon>Pseudomonadota</taxon>
        <taxon>Gammaproteobacteria</taxon>
        <taxon>Enterobacterales</taxon>
        <taxon>Enterobacteriaceae</taxon>
        <taxon>Salmonella</taxon>
    </lineage>
</organism>